<accession>Q4A9R7</accession>
<evidence type="ECO:0000255" key="1">
    <source>
        <dbReference type="HAMAP-Rule" id="MF_00031"/>
    </source>
</evidence>
<evidence type="ECO:0000256" key="2">
    <source>
        <dbReference type="SAM" id="MobiDB-lite"/>
    </source>
</evidence>
<gene>
    <name evidence="1" type="primary">ruvA</name>
    <name type="ordered locus">MHJ_0418</name>
</gene>
<organism>
    <name type="scientific">Mesomycoplasma hyopneumoniae (strain J / ATCC 25934 / NCTC 10110)</name>
    <name type="common">Mycoplasma hyopneumoniae</name>
    <dbReference type="NCBI Taxonomy" id="262719"/>
    <lineage>
        <taxon>Bacteria</taxon>
        <taxon>Bacillati</taxon>
        <taxon>Mycoplasmatota</taxon>
        <taxon>Mycoplasmoidales</taxon>
        <taxon>Metamycoplasmataceae</taxon>
        <taxon>Mesomycoplasma</taxon>
    </lineage>
</organism>
<reference key="1">
    <citation type="journal article" date="2005" name="J. Bacteriol.">
        <title>Swine and poultry pathogens: the complete genome sequences of two strains of Mycoplasma hyopneumoniae and a strain of Mycoplasma synoviae.</title>
        <authorList>
            <person name="Vasconcelos A.T.R."/>
            <person name="Ferreira H.B."/>
            <person name="Bizarro C.V."/>
            <person name="Bonatto S.L."/>
            <person name="Carvalho M.O."/>
            <person name="Pinto P.M."/>
            <person name="Almeida D.F."/>
            <person name="Almeida L.G.P."/>
            <person name="Almeida R."/>
            <person name="Alves-Junior L."/>
            <person name="Assuncao E.N."/>
            <person name="Azevedo V.A.C."/>
            <person name="Bogo M.R."/>
            <person name="Brigido M.M."/>
            <person name="Brocchi M."/>
            <person name="Burity H.A."/>
            <person name="Camargo A.A."/>
            <person name="Camargo S.S."/>
            <person name="Carepo M.S."/>
            <person name="Carraro D.M."/>
            <person name="de Mattos Cascardo J.C."/>
            <person name="Castro L.A."/>
            <person name="Cavalcanti G."/>
            <person name="Chemale G."/>
            <person name="Collevatti R.G."/>
            <person name="Cunha C.W."/>
            <person name="Dallagiovanna B."/>
            <person name="Dambros B.P."/>
            <person name="Dellagostin O.A."/>
            <person name="Falcao C."/>
            <person name="Fantinatti-Garboggini F."/>
            <person name="Felipe M.S.S."/>
            <person name="Fiorentin L."/>
            <person name="Franco G.R."/>
            <person name="Freitas N.S.A."/>
            <person name="Frias D."/>
            <person name="Grangeiro T.B."/>
            <person name="Grisard E.C."/>
            <person name="Guimaraes C.T."/>
            <person name="Hungria M."/>
            <person name="Jardim S.N."/>
            <person name="Krieger M.A."/>
            <person name="Laurino J.P."/>
            <person name="Lima L.F.A."/>
            <person name="Lopes M.I."/>
            <person name="Loreto E.L.S."/>
            <person name="Madeira H.M.F."/>
            <person name="Manfio G.P."/>
            <person name="Maranhao A.Q."/>
            <person name="Martinkovics C.T."/>
            <person name="Medeiros S.R.B."/>
            <person name="Moreira M.A.M."/>
            <person name="Neiva M."/>
            <person name="Ramalho-Neto C.E."/>
            <person name="Nicolas M.F."/>
            <person name="Oliveira S.C."/>
            <person name="Paixao R.F.C."/>
            <person name="Pedrosa F.O."/>
            <person name="Pena S.D.J."/>
            <person name="Pereira M."/>
            <person name="Pereira-Ferrari L."/>
            <person name="Piffer I."/>
            <person name="Pinto L.S."/>
            <person name="Potrich D.P."/>
            <person name="Salim A.C.M."/>
            <person name="Santos F.R."/>
            <person name="Schmitt R."/>
            <person name="Schneider M.P.C."/>
            <person name="Schrank A."/>
            <person name="Schrank I.S."/>
            <person name="Schuck A.F."/>
            <person name="Seuanez H.N."/>
            <person name="Silva D.W."/>
            <person name="Silva R."/>
            <person name="Silva S.C."/>
            <person name="Soares C.M.A."/>
            <person name="Souza K.R.L."/>
            <person name="Souza R.C."/>
            <person name="Staats C.C."/>
            <person name="Steffens M.B.R."/>
            <person name="Teixeira S.M.R."/>
            <person name="Urmenyi T.P."/>
            <person name="Vainstein M.H."/>
            <person name="Zuccherato L.W."/>
            <person name="Simpson A.J.G."/>
            <person name="Zaha A."/>
        </authorList>
    </citation>
    <scope>NUCLEOTIDE SEQUENCE [LARGE SCALE GENOMIC DNA]</scope>
    <source>
        <strain>J / ATCC 25934 / NCTC 10110</strain>
    </source>
</reference>
<comment type="function">
    <text evidence="1">The RuvA-RuvB-RuvC complex processes Holliday junction (HJ) DNA during genetic recombination and DNA repair, while the RuvA-RuvB complex plays an important role in the rescue of blocked DNA replication forks via replication fork reversal (RFR). RuvA specifically binds to HJ cruciform DNA, conferring on it an open structure. The RuvB hexamer acts as an ATP-dependent pump, pulling dsDNA into and through the RuvAB complex. HJ branch migration allows RuvC to scan DNA until it finds its consensus sequence, where it cleaves and resolves the cruciform DNA.</text>
</comment>
<comment type="subunit">
    <text evidence="1">Homotetramer. Forms an RuvA(8)-RuvB(12)-Holliday junction (HJ) complex. HJ DNA is sandwiched between 2 RuvA tetramers; dsDNA enters through RuvA and exits via RuvB. An RuvB hexamer assembles on each DNA strand where it exits the tetramer. Each RuvB hexamer is contacted by two RuvA subunits (via domain III) on 2 adjacent RuvB subunits; this complex drives branch migration. In the full resolvosome a probable DNA-RuvA(4)-RuvB(12)-RuvC(2) complex forms which resolves the HJ.</text>
</comment>
<comment type="subcellular location">
    <subcellularLocation>
        <location evidence="1">Cytoplasm</location>
    </subcellularLocation>
</comment>
<comment type="domain">
    <text evidence="1">Has three domains with a flexible linker between the domains II and III and assumes an 'L' shape. Domain III is highly mobile and contacts RuvB.</text>
</comment>
<comment type="similarity">
    <text evidence="1">Belongs to the RuvA family.</text>
</comment>
<name>RUVA_MESHJ</name>
<keyword id="KW-0963">Cytoplasm</keyword>
<keyword id="KW-0227">DNA damage</keyword>
<keyword id="KW-0233">DNA recombination</keyword>
<keyword id="KW-0234">DNA repair</keyword>
<keyword id="KW-0238">DNA-binding</keyword>
<proteinExistence type="inferred from homology"/>
<protein>
    <recommendedName>
        <fullName evidence="1">Holliday junction branch migration complex subunit RuvA</fullName>
    </recommendedName>
</protein>
<sequence length="221" mass="25916">MQIYQFGKIVSKNKNYLILENHGSGYLIYVPRIDRFSRDENRKIYIYEHENDYTKITYGFASFRERILFEDLISIQGVGPKTAISALNSGMQNLINLIAANDWKTLAKIPYLSEKNAKQIVFEFQKKYERFNENHKNQTEETNQDSQEKELEKKDDLADITIQKSNLEDKTAANLEDTLKMLGFKPRQIDYALTKVEPNENFENLIENAIKIISNAREFRN</sequence>
<dbReference type="EMBL" id="AE017243">
    <property type="protein sequence ID" value="AAZ44504.1"/>
    <property type="molecule type" value="Genomic_DNA"/>
</dbReference>
<dbReference type="RefSeq" id="WP_011284176.1">
    <property type="nucleotide sequence ID" value="NC_007295.1"/>
</dbReference>
<dbReference type="SMR" id="Q4A9R7"/>
<dbReference type="GeneID" id="41334719"/>
<dbReference type="KEGG" id="mhj:MHJ_0418"/>
<dbReference type="eggNOG" id="COG0632">
    <property type="taxonomic scope" value="Bacteria"/>
</dbReference>
<dbReference type="HOGENOM" id="CLU_087936_1_1_14"/>
<dbReference type="OrthoDB" id="5293449at2"/>
<dbReference type="Proteomes" id="UP000000548">
    <property type="component" value="Chromosome"/>
</dbReference>
<dbReference type="GO" id="GO:0005737">
    <property type="term" value="C:cytoplasm"/>
    <property type="evidence" value="ECO:0007669"/>
    <property type="project" value="UniProtKB-SubCell"/>
</dbReference>
<dbReference type="GO" id="GO:0009379">
    <property type="term" value="C:Holliday junction helicase complex"/>
    <property type="evidence" value="ECO:0007669"/>
    <property type="project" value="InterPro"/>
</dbReference>
<dbReference type="GO" id="GO:0048476">
    <property type="term" value="C:Holliday junction resolvase complex"/>
    <property type="evidence" value="ECO:0007669"/>
    <property type="project" value="UniProtKB-UniRule"/>
</dbReference>
<dbReference type="GO" id="GO:0005524">
    <property type="term" value="F:ATP binding"/>
    <property type="evidence" value="ECO:0007669"/>
    <property type="project" value="InterPro"/>
</dbReference>
<dbReference type="GO" id="GO:0000400">
    <property type="term" value="F:four-way junction DNA binding"/>
    <property type="evidence" value="ECO:0007669"/>
    <property type="project" value="UniProtKB-UniRule"/>
</dbReference>
<dbReference type="GO" id="GO:0009378">
    <property type="term" value="F:four-way junction helicase activity"/>
    <property type="evidence" value="ECO:0007669"/>
    <property type="project" value="InterPro"/>
</dbReference>
<dbReference type="GO" id="GO:0006310">
    <property type="term" value="P:DNA recombination"/>
    <property type="evidence" value="ECO:0007669"/>
    <property type="project" value="UniProtKB-UniRule"/>
</dbReference>
<dbReference type="GO" id="GO:0006281">
    <property type="term" value="P:DNA repair"/>
    <property type="evidence" value="ECO:0007669"/>
    <property type="project" value="UniProtKB-UniRule"/>
</dbReference>
<dbReference type="Gene3D" id="1.10.150.20">
    <property type="entry name" value="5' to 3' exonuclease, C-terminal subdomain"/>
    <property type="match status" value="1"/>
</dbReference>
<dbReference type="Gene3D" id="2.40.50.140">
    <property type="entry name" value="Nucleic acid-binding proteins"/>
    <property type="match status" value="1"/>
</dbReference>
<dbReference type="HAMAP" id="MF_00031">
    <property type="entry name" value="DNA_HJ_migration_RuvA"/>
    <property type="match status" value="1"/>
</dbReference>
<dbReference type="InterPro" id="IPR013849">
    <property type="entry name" value="DNA_helicase_Holl-junc_RuvA_I"/>
</dbReference>
<dbReference type="InterPro" id="IPR012340">
    <property type="entry name" value="NA-bd_OB-fold"/>
</dbReference>
<dbReference type="InterPro" id="IPR000085">
    <property type="entry name" value="RuvA"/>
</dbReference>
<dbReference type="InterPro" id="IPR010994">
    <property type="entry name" value="RuvA_2-like"/>
</dbReference>
<dbReference type="InterPro" id="IPR011114">
    <property type="entry name" value="RuvA_C"/>
</dbReference>
<dbReference type="NCBIfam" id="TIGR00084">
    <property type="entry name" value="ruvA"/>
    <property type="match status" value="1"/>
</dbReference>
<dbReference type="Pfam" id="PF14520">
    <property type="entry name" value="HHH_5"/>
    <property type="match status" value="1"/>
</dbReference>
<dbReference type="Pfam" id="PF07499">
    <property type="entry name" value="RuvA_C"/>
    <property type="match status" value="1"/>
</dbReference>
<dbReference type="Pfam" id="PF01330">
    <property type="entry name" value="RuvA_N"/>
    <property type="match status" value="1"/>
</dbReference>
<dbReference type="SUPFAM" id="SSF47781">
    <property type="entry name" value="RuvA domain 2-like"/>
    <property type="match status" value="1"/>
</dbReference>
<feature type="chain" id="PRO_0000224883" description="Holliday junction branch migration complex subunit RuvA">
    <location>
        <begin position="1"/>
        <end position="221"/>
    </location>
</feature>
<feature type="region of interest" description="Domain I" evidence="1">
    <location>
        <begin position="1"/>
        <end position="61"/>
    </location>
</feature>
<feature type="region of interest" description="Domain II" evidence="1">
    <location>
        <begin position="62"/>
        <end position="139"/>
    </location>
</feature>
<feature type="region of interest" description="Disordered" evidence="2">
    <location>
        <begin position="133"/>
        <end position="155"/>
    </location>
</feature>
<feature type="region of interest" description="Flexible linker" evidence="1">
    <location>
        <begin position="140"/>
        <end position="166"/>
    </location>
</feature>
<feature type="region of interest" description="Domain III" evidence="1">
    <location>
        <begin position="167"/>
        <end position="221"/>
    </location>
</feature>
<feature type="compositionally biased region" description="Basic and acidic residues" evidence="2">
    <location>
        <begin position="146"/>
        <end position="155"/>
    </location>
</feature>